<accession>B0UWG8</accession>
<evidence type="ECO:0000255" key="1">
    <source>
        <dbReference type="HAMAP-Rule" id="MF_01416"/>
    </source>
</evidence>
<protein>
    <recommendedName>
        <fullName evidence="1">ATP synthase subunit delta</fullName>
    </recommendedName>
    <alternativeName>
        <fullName evidence="1">ATP synthase F(1) sector subunit delta</fullName>
    </alternativeName>
    <alternativeName>
        <fullName evidence="1">F-type ATPase subunit delta</fullName>
        <shortName evidence="1">F-ATPase subunit delta</shortName>
    </alternativeName>
</protein>
<gene>
    <name evidence="1" type="primary">atpH</name>
    <name type="ordered locus">HSM_1853</name>
</gene>
<dbReference type="EMBL" id="CP000947">
    <property type="protein sequence ID" value="ACA31642.1"/>
    <property type="molecule type" value="Genomic_DNA"/>
</dbReference>
<dbReference type="RefSeq" id="WP_012340944.1">
    <property type="nucleotide sequence ID" value="NC_010519.1"/>
</dbReference>
<dbReference type="SMR" id="B0UWG8"/>
<dbReference type="STRING" id="228400.HSM_1853"/>
<dbReference type="GeneID" id="31488160"/>
<dbReference type="KEGG" id="hsm:HSM_1853"/>
<dbReference type="HOGENOM" id="CLU_085114_3_0_6"/>
<dbReference type="GO" id="GO:0005886">
    <property type="term" value="C:plasma membrane"/>
    <property type="evidence" value="ECO:0007669"/>
    <property type="project" value="UniProtKB-SubCell"/>
</dbReference>
<dbReference type="GO" id="GO:0045259">
    <property type="term" value="C:proton-transporting ATP synthase complex"/>
    <property type="evidence" value="ECO:0007669"/>
    <property type="project" value="UniProtKB-KW"/>
</dbReference>
<dbReference type="GO" id="GO:0046933">
    <property type="term" value="F:proton-transporting ATP synthase activity, rotational mechanism"/>
    <property type="evidence" value="ECO:0007669"/>
    <property type="project" value="UniProtKB-UniRule"/>
</dbReference>
<dbReference type="Gene3D" id="1.10.520.20">
    <property type="entry name" value="N-terminal domain of the delta subunit of the F1F0-ATP synthase"/>
    <property type="match status" value="1"/>
</dbReference>
<dbReference type="HAMAP" id="MF_01416">
    <property type="entry name" value="ATP_synth_delta_bact"/>
    <property type="match status" value="1"/>
</dbReference>
<dbReference type="InterPro" id="IPR026015">
    <property type="entry name" value="ATP_synth_OSCP/delta_N_sf"/>
</dbReference>
<dbReference type="InterPro" id="IPR020781">
    <property type="entry name" value="ATPase_OSCP/d_CS"/>
</dbReference>
<dbReference type="InterPro" id="IPR000711">
    <property type="entry name" value="ATPase_OSCP/dsu"/>
</dbReference>
<dbReference type="NCBIfam" id="TIGR01145">
    <property type="entry name" value="ATP_synt_delta"/>
    <property type="match status" value="1"/>
</dbReference>
<dbReference type="NCBIfam" id="NF004402">
    <property type="entry name" value="PRK05758.2-2"/>
    <property type="match status" value="1"/>
</dbReference>
<dbReference type="NCBIfam" id="NF004404">
    <property type="entry name" value="PRK05758.2-5"/>
    <property type="match status" value="1"/>
</dbReference>
<dbReference type="PANTHER" id="PTHR11910">
    <property type="entry name" value="ATP SYNTHASE DELTA CHAIN"/>
    <property type="match status" value="1"/>
</dbReference>
<dbReference type="Pfam" id="PF00213">
    <property type="entry name" value="OSCP"/>
    <property type="match status" value="1"/>
</dbReference>
<dbReference type="PRINTS" id="PR00125">
    <property type="entry name" value="ATPASEDELTA"/>
</dbReference>
<dbReference type="SUPFAM" id="SSF47928">
    <property type="entry name" value="N-terminal domain of the delta subunit of the F1F0-ATP synthase"/>
    <property type="match status" value="1"/>
</dbReference>
<dbReference type="PROSITE" id="PS00389">
    <property type="entry name" value="ATPASE_DELTA"/>
    <property type="match status" value="1"/>
</dbReference>
<sequence length="182" mass="20669">MSELTTIARPYAKAVFDFAVEQSEKDKSAVEKWTNMLEFLSELIRHDKVQSYLTSTSSTFKLADTVILICGEQLDQYGQNLVRLMAENKRLAVLPAVFNEFKSYVEEYKSLSQVEVVSAQQLNDVQQQKIITAMEKRLARKVILNCRIDSSLIAGAIIRTNDFVIDGSCRGQINRLANELRL</sequence>
<keyword id="KW-0066">ATP synthesis</keyword>
<keyword id="KW-0997">Cell inner membrane</keyword>
<keyword id="KW-1003">Cell membrane</keyword>
<keyword id="KW-0139">CF(1)</keyword>
<keyword id="KW-0375">Hydrogen ion transport</keyword>
<keyword id="KW-0406">Ion transport</keyword>
<keyword id="KW-0472">Membrane</keyword>
<keyword id="KW-0813">Transport</keyword>
<proteinExistence type="inferred from homology"/>
<comment type="function">
    <text evidence="1">F(1)F(0) ATP synthase produces ATP from ADP in the presence of a proton or sodium gradient. F-type ATPases consist of two structural domains, F(1) containing the extramembraneous catalytic core and F(0) containing the membrane proton channel, linked together by a central stalk and a peripheral stalk. During catalysis, ATP synthesis in the catalytic domain of F(1) is coupled via a rotary mechanism of the central stalk subunits to proton translocation.</text>
</comment>
<comment type="function">
    <text evidence="1">This protein is part of the stalk that links CF(0) to CF(1). It either transmits conformational changes from CF(0) to CF(1) or is implicated in proton conduction.</text>
</comment>
<comment type="subunit">
    <text evidence="1">F-type ATPases have 2 components, F(1) - the catalytic core - and F(0) - the membrane proton channel. F(1) has five subunits: alpha(3), beta(3), gamma(1), delta(1), epsilon(1). F(0) has three main subunits: a(1), b(2) and c(10-14). The alpha and beta chains form an alternating ring which encloses part of the gamma chain. F(1) is attached to F(0) by a central stalk formed by the gamma and epsilon chains, while a peripheral stalk is formed by the delta and b chains.</text>
</comment>
<comment type="subcellular location">
    <subcellularLocation>
        <location evidence="1">Cell inner membrane</location>
        <topology evidence="1">Peripheral membrane protein</topology>
    </subcellularLocation>
</comment>
<comment type="similarity">
    <text evidence="1">Belongs to the ATPase delta chain family.</text>
</comment>
<feature type="chain" id="PRO_0000370996" description="ATP synthase subunit delta">
    <location>
        <begin position="1"/>
        <end position="182"/>
    </location>
</feature>
<reference key="1">
    <citation type="submission" date="2008-02" db="EMBL/GenBank/DDBJ databases">
        <title>Complete sequence of Haemophilus somnus 2336.</title>
        <authorList>
            <consortium name="US DOE Joint Genome Institute"/>
            <person name="Siddaramappa S."/>
            <person name="Duncan A.J."/>
            <person name="Challacombe J.F."/>
            <person name="Rainey D."/>
            <person name="Gillaspy A.F."/>
            <person name="Carson M."/>
            <person name="Gipson J."/>
            <person name="Gipson M."/>
            <person name="Bruce D."/>
            <person name="Detter J.C."/>
            <person name="Han C.S."/>
            <person name="Land M."/>
            <person name="Tapia R."/>
            <person name="Thompson L.S."/>
            <person name="Orvis J."/>
            <person name="Zaitshik J."/>
            <person name="Barnes G."/>
            <person name="Brettin T.S."/>
            <person name="Dyer D.W."/>
            <person name="Inzana T.J."/>
        </authorList>
    </citation>
    <scope>NUCLEOTIDE SEQUENCE [LARGE SCALE GENOMIC DNA]</scope>
    <source>
        <strain>2336</strain>
    </source>
</reference>
<organism>
    <name type="scientific">Histophilus somni (strain 2336)</name>
    <name type="common">Haemophilus somnus</name>
    <dbReference type="NCBI Taxonomy" id="228400"/>
    <lineage>
        <taxon>Bacteria</taxon>
        <taxon>Pseudomonadati</taxon>
        <taxon>Pseudomonadota</taxon>
        <taxon>Gammaproteobacteria</taxon>
        <taxon>Pasteurellales</taxon>
        <taxon>Pasteurellaceae</taxon>
        <taxon>Histophilus</taxon>
    </lineage>
</organism>
<name>ATPD_HISS2</name>